<gene>
    <name evidence="1" type="primary">rbcL</name>
</gene>
<proteinExistence type="inferred from homology"/>
<comment type="function">
    <text evidence="1">RuBisCO catalyzes two reactions: the carboxylation of D-ribulose 1,5-bisphosphate, the primary event in carbon dioxide fixation, as well as the oxidative fragmentation of the pentose substrate in the photorespiration process. Both reactions occur simultaneously and in competition at the same active site.</text>
</comment>
<comment type="catalytic activity">
    <reaction evidence="1">
        <text>2 (2R)-3-phosphoglycerate + 2 H(+) = D-ribulose 1,5-bisphosphate + CO2 + H2O</text>
        <dbReference type="Rhea" id="RHEA:23124"/>
        <dbReference type="ChEBI" id="CHEBI:15377"/>
        <dbReference type="ChEBI" id="CHEBI:15378"/>
        <dbReference type="ChEBI" id="CHEBI:16526"/>
        <dbReference type="ChEBI" id="CHEBI:57870"/>
        <dbReference type="ChEBI" id="CHEBI:58272"/>
        <dbReference type="EC" id="4.1.1.39"/>
    </reaction>
</comment>
<comment type="catalytic activity">
    <reaction evidence="1">
        <text>D-ribulose 1,5-bisphosphate + O2 = 2-phosphoglycolate + (2R)-3-phosphoglycerate + 2 H(+)</text>
        <dbReference type="Rhea" id="RHEA:36631"/>
        <dbReference type="ChEBI" id="CHEBI:15378"/>
        <dbReference type="ChEBI" id="CHEBI:15379"/>
        <dbReference type="ChEBI" id="CHEBI:57870"/>
        <dbReference type="ChEBI" id="CHEBI:58033"/>
        <dbReference type="ChEBI" id="CHEBI:58272"/>
    </reaction>
</comment>
<comment type="cofactor">
    <cofactor evidence="1">
        <name>Mg(2+)</name>
        <dbReference type="ChEBI" id="CHEBI:18420"/>
    </cofactor>
    <text evidence="1">Binds 1 Mg(2+) ion per subunit.</text>
</comment>
<comment type="subunit">
    <text evidence="1">Heterohexadecamer of 8 large chains and 8 small chains; disulfide-linked. The disulfide link is formed within the large subunit homodimers.</text>
</comment>
<comment type="subcellular location">
    <subcellularLocation>
        <location>Plastid</location>
        <location>Chloroplast</location>
    </subcellularLocation>
</comment>
<comment type="PTM">
    <text evidence="1">The disulfide bond which can form in the large chain dimeric partners within the hexadecamer appears to be associated with oxidative stress and protein turnover.</text>
</comment>
<comment type="miscellaneous">
    <text evidence="1">The basic functional RuBisCO is composed of a large chain homodimer in a 'head-to-tail' conformation. In form I RuBisCO this homodimer is arranged in a barrel-like tetramer with the small subunits forming a tetrameric 'cap' on each end of the 'barrel'.</text>
</comment>
<comment type="similarity">
    <text evidence="1">Belongs to the RuBisCO large chain family. Type I subfamily.</text>
</comment>
<reference key="1">
    <citation type="journal article" date="1995" name="J. Mol. Evol.">
        <title>Comparison of the evolution of ribulose-1, 5-biphosphate carboxylase (rbcL) and atpB-rbcL noncoding spacer sequences in a recent plant group, the tribe Rubieae (Rubiaceae).</title>
        <authorList>
            <person name="Manen J.F."/>
            <person name="Natali A."/>
        </authorList>
    </citation>
    <scope>NUCLEOTIDE SEQUENCE [GENOMIC DNA]</scope>
</reference>
<protein>
    <recommendedName>
        <fullName evidence="1">Ribulose bisphosphate carboxylase large chain</fullName>
        <shortName evidence="1">RuBisCO large subunit</shortName>
        <ecNumber evidence="1">4.1.1.39</ecNumber>
    </recommendedName>
</protein>
<dbReference type="EC" id="4.1.1.39" evidence="1"/>
<dbReference type="EMBL" id="X81090">
    <property type="protein sequence ID" value="CAA56996.1"/>
    <property type="molecule type" value="Genomic_DNA"/>
</dbReference>
<dbReference type="PIR" id="S47226">
    <property type="entry name" value="S47226"/>
</dbReference>
<dbReference type="SMR" id="Q32255"/>
<dbReference type="GO" id="GO:0009507">
    <property type="term" value="C:chloroplast"/>
    <property type="evidence" value="ECO:0007669"/>
    <property type="project" value="UniProtKB-SubCell"/>
</dbReference>
<dbReference type="GO" id="GO:0000287">
    <property type="term" value="F:magnesium ion binding"/>
    <property type="evidence" value="ECO:0007669"/>
    <property type="project" value="InterPro"/>
</dbReference>
<dbReference type="GO" id="GO:0004497">
    <property type="term" value="F:monooxygenase activity"/>
    <property type="evidence" value="ECO:0007669"/>
    <property type="project" value="UniProtKB-KW"/>
</dbReference>
<dbReference type="GO" id="GO:0016984">
    <property type="term" value="F:ribulose-bisphosphate carboxylase activity"/>
    <property type="evidence" value="ECO:0007669"/>
    <property type="project" value="UniProtKB-EC"/>
</dbReference>
<dbReference type="GO" id="GO:0009853">
    <property type="term" value="P:photorespiration"/>
    <property type="evidence" value="ECO:0007669"/>
    <property type="project" value="UniProtKB-KW"/>
</dbReference>
<dbReference type="GO" id="GO:0019253">
    <property type="term" value="P:reductive pentose-phosphate cycle"/>
    <property type="evidence" value="ECO:0007669"/>
    <property type="project" value="UniProtKB-KW"/>
</dbReference>
<dbReference type="CDD" id="cd08212">
    <property type="entry name" value="RuBisCO_large_I"/>
    <property type="match status" value="1"/>
</dbReference>
<dbReference type="FunFam" id="3.20.20.110:FF:000003">
    <property type="entry name" value="Ribulose bisphosphate carboxylase large chain"/>
    <property type="match status" value="1"/>
</dbReference>
<dbReference type="FunFam" id="3.30.70.150:FF:000001">
    <property type="entry name" value="Ribulose bisphosphate carboxylase large chain"/>
    <property type="match status" value="1"/>
</dbReference>
<dbReference type="Gene3D" id="3.20.20.110">
    <property type="entry name" value="Ribulose bisphosphate carboxylase, large subunit, C-terminal domain"/>
    <property type="match status" value="1"/>
</dbReference>
<dbReference type="Gene3D" id="3.30.70.150">
    <property type="entry name" value="RuBisCO large subunit, N-terminal domain"/>
    <property type="match status" value="1"/>
</dbReference>
<dbReference type="HAMAP" id="MF_01338">
    <property type="entry name" value="RuBisCO_L_type1"/>
    <property type="match status" value="1"/>
</dbReference>
<dbReference type="InterPro" id="IPR033966">
    <property type="entry name" value="RuBisCO"/>
</dbReference>
<dbReference type="InterPro" id="IPR020878">
    <property type="entry name" value="RuBisCo_large_chain_AS"/>
</dbReference>
<dbReference type="InterPro" id="IPR000685">
    <property type="entry name" value="RuBisCO_lsu_C"/>
</dbReference>
<dbReference type="InterPro" id="IPR036376">
    <property type="entry name" value="RuBisCO_lsu_C_sf"/>
</dbReference>
<dbReference type="InterPro" id="IPR017443">
    <property type="entry name" value="RuBisCO_lsu_fd_N"/>
</dbReference>
<dbReference type="InterPro" id="IPR036422">
    <property type="entry name" value="RuBisCO_lsu_N_sf"/>
</dbReference>
<dbReference type="InterPro" id="IPR020888">
    <property type="entry name" value="RuBisCO_lsuI"/>
</dbReference>
<dbReference type="NCBIfam" id="NF003252">
    <property type="entry name" value="PRK04208.1"/>
    <property type="match status" value="1"/>
</dbReference>
<dbReference type="PANTHER" id="PTHR42704">
    <property type="entry name" value="RIBULOSE BISPHOSPHATE CARBOXYLASE"/>
    <property type="match status" value="1"/>
</dbReference>
<dbReference type="PANTHER" id="PTHR42704:SF15">
    <property type="entry name" value="RIBULOSE BISPHOSPHATE CARBOXYLASE LARGE CHAIN"/>
    <property type="match status" value="1"/>
</dbReference>
<dbReference type="Pfam" id="PF00016">
    <property type="entry name" value="RuBisCO_large"/>
    <property type="match status" value="1"/>
</dbReference>
<dbReference type="Pfam" id="PF02788">
    <property type="entry name" value="RuBisCO_large_N"/>
    <property type="match status" value="1"/>
</dbReference>
<dbReference type="SFLD" id="SFLDG01052">
    <property type="entry name" value="RuBisCO"/>
    <property type="match status" value="1"/>
</dbReference>
<dbReference type="SFLD" id="SFLDS00014">
    <property type="entry name" value="RuBisCO"/>
    <property type="match status" value="1"/>
</dbReference>
<dbReference type="SFLD" id="SFLDG00301">
    <property type="entry name" value="RuBisCO-like_proteins"/>
    <property type="match status" value="1"/>
</dbReference>
<dbReference type="SUPFAM" id="SSF51649">
    <property type="entry name" value="RuBisCo, C-terminal domain"/>
    <property type="match status" value="1"/>
</dbReference>
<dbReference type="SUPFAM" id="SSF54966">
    <property type="entry name" value="RuBisCO, large subunit, small (N-terminal) domain"/>
    <property type="match status" value="1"/>
</dbReference>
<dbReference type="PROSITE" id="PS00157">
    <property type="entry name" value="RUBISCO_LARGE"/>
    <property type="match status" value="1"/>
</dbReference>
<evidence type="ECO:0000255" key="1">
    <source>
        <dbReference type="HAMAP-Rule" id="MF_01338"/>
    </source>
</evidence>
<keyword id="KW-0007">Acetylation</keyword>
<keyword id="KW-0113">Calvin cycle</keyword>
<keyword id="KW-0120">Carbon dioxide fixation</keyword>
<keyword id="KW-0150">Chloroplast</keyword>
<keyword id="KW-1015">Disulfide bond</keyword>
<keyword id="KW-0456">Lyase</keyword>
<keyword id="KW-0460">Magnesium</keyword>
<keyword id="KW-0479">Metal-binding</keyword>
<keyword id="KW-0488">Methylation</keyword>
<keyword id="KW-0503">Monooxygenase</keyword>
<keyword id="KW-0560">Oxidoreductase</keyword>
<keyword id="KW-0601">Photorespiration</keyword>
<keyword id="KW-0602">Photosynthesis</keyword>
<keyword id="KW-0934">Plastid</keyword>
<feature type="propeptide" id="PRO_0000031225" evidence="1">
    <location>
        <begin position="1"/>
        <end position="2"/>
    </location>
</feature>
<feature type="chain" id="PRO_0000031226" description="Ribulose bisphosphate carboxylase large chain">
    <location>
        <begin position="3"/>
        <end position="453" status="greater than"/>
    </location>
</feature>
<feature type="active site" description="Proton acceptor" evidence="1">
    <location>
        <position position="175"/>
    </location>
</feature>
<feature type="active site" description="Proton acceptor" evidence="1">
    <location>
        <position position="294"/>
    </location>
</feature>
<feature type="binding site" description="in homodimeric partner" evidence="1">
    <location>
        <position position="123"/>
    </location>
    <ligand>
        <name>substrate</name>
    </ligand>
</feature>
<feature type="binding site" evidence="1">
    <location>
        <position position="173"/>
    </location>
    <ligand>
        <name>substrate</name>
    </ligand>
</feature>
<feature type="binding site" evidence="1">
    <location>
        <position position="177"/>
    </location>
    <ligand>
        <name>substrate</name>
    </ligand>
</feature>
<feature type="binding site" description="via carbamate group" evidence="1">
    <location>
        <position position="201"/>
    </location>
    <ligand>
        <name>Mg(2+)</name>
        <dbReference type="ChEBI" id="CHEBI:18420"/>
    </ligand>
</feature>
<feature type="binding site" evidence="1">
    <location>
        <position position="203"/>
    </location>
    <ligand>
        <name>Mg(2+)</name>
        <dbReference type="ChEBI" id="CHEBI:18420"/>
    </ligand>
</feature>
<feature type="binding site" evidence="1">
    <location>
        <position position="204"/>
    </location>
    <ligand>
        <name>Mg(2+)</name>
        <dbReference type="ChEBI" id="CHEBI:18420"/>
    </ligand>
</feature>
<feature type="binding site" evidence="1">
    <location>
        <position position="295"/>
    </location>
    <ligand>
        <name>substrate</name>
    </ligand>
</feature>
<feature type="binding site" evidence="1">
    <location>
        <position position="327"/>
    </location>
    <ligand>
        <name>substrate</name>
    </ligand>
</feature>
<feature type="binding site" evidence="1">
    <location>
        <position position="379"/>
    </location>
    <ligand>
        <name>substrate</name>
    </ligand>
</feature>
<feature type="site" description="Transition state stabilizer" evidence="1">
    <location>
        <position position="334"/>
    </location>
</feature>
<feature type="modified residue" description="N-acetylproline" evidence="1">
    <location>
        <position position="3"/>
    </location>
</feature>
<feature type="modified residue" description="N6,N6,N6-trimethyllysine" evidence="1">
    <location>
        <position position="14"/>
    </location>
</feature>
<feature type="modified residue" description="N6-carboxylysine" evidence="1">
    <location>
        <position position="201"/>
    </location>
</feature>
<feature type="disulfide bond" description="Interchain; in linked form" evidence="1">
    <location>
        <position position="247"/>
    </location>
</feature>
<feature type="non-terminal residue">
    <location>
        <position position="453"/>
    </location>
</feature>
<geneLocation type="chloroplast"/>
<accession>Q32255</accession>
<name>RBL_GALAL</name>
<sequence>MSPQTETKAGVGFKAGVKEYKLTYYTPEYETKDTDILAAFRVTPQPGVPPEERGAAVAAESSTGTWTTVWTDGLTSLDRYKGRCYHIEPVPGEEEQFIAYVAYPLDLFEEGSVTNMFTSIVGNVFGFKALRALRLEDLRIPVAYVKTFQGPPHGIQVERDKLNKYGRPLLGCTIKPKLGLSAKNYGRAVYECLRGGLDFTKDDENVNSQPFMRWRDRFLFCAEAIYKSQAETGEIKGHYLNATAGTCEEMIKRAVFARELGVPIVMHDYLTGGFTANTSLSHYCRDNGLLLHIHRAMHAVIDRQKNHGMHFRVLAKALRMSGGDHVHSGTVVGKLEGERDITLGFVDLLRDDYIEKDRSRGVYFTQDWVSLPGVLPVASRGIHVWHMPALTEIFGDDSVLQFGGGTLGHPWGNAPGAVANRVALEACVKARNEGRDLAVEGGEIIREACKWSP</sequence>
<organism>
    <name type="scientific">Galium album</name>
    <name type="common">White bedstraw</name>
    <dbReference type="NCBI Taxonomy" id="29787"/>
    <lineage>
        <taxon>Eukaryota</taxon>
        <taxon>Viridiplantae</taxon>
        <taxon>Streptophyta</taxon>
        <taxon>Embryophyta</taxon>
        <taxon>Tracheophyta</taxon>
        <taxon>Spermatophyta</taxon>
        <taxon>Magnoliopsida</taxon>
        <taxon>eudicotyledons</taxon>
        <taxon>Gunneridae</taxon>
        <taxon>Pentapetalae</taxon>
        <taxon>asterids</taxon>
        <taxon>lamiids</taxon>
        <taxon>Gentianales</taxon>
        <taxon>Rubiaceae</taxon>
        <taxon>Rubioideae</taxon>
        <taxon>Rubieae</taxon>
        <taxon>Galium</taxon>
    </lineage>
</organism>